<organism>
    <name type="scientific">Aliivibrio fischeri (strain ATCC 700601 / ES114)</name>
    <name type="common">Vibrio fischeri</name>
    <dbReference type="NCBI Taxonomy" id="312309"/>
    <lineage>
        <taxon>Bacteria</taxon>
        <taxon>Pseudomonadati</taxon>
        <taxon>Pseudomonadota</taxon>
        <taxon>Gammaproteobacteria</taxon>
        <taxon>Vibrionales</taxon>
        <taxon>Vibrionaceae</taxon>
        <taxon>Aliivibrio</taxon>
    </lineage>
</organism>
<accession>Q5E5P2</accession>
<keyword id="KW-0030">Aminoacyl-tRNA synthetase</keyword>
<keyword id="KW-0067">ATP-binding</keyword>
<keyword id="KW-0963">Cytoplasm</keyword>
<keyword id="KW-0436">Ligase</keyword>
<keyword id="KW-0547">Nucleotide-binding</keyword>
<keyword id="KW-0648">Protein biosynthesis</keyword>
<keyword id="KW-1185">Reference proteome</keyword>
<evidence type="ECO:0000255" key="1">
    <source>
        <dbReference type="HAMAP-Rule" id="MF_00534"/>
    </source>
</evidence>
<name>SYN_ALIF1</name>
<dbReference type="EC" id="6.1.1.22" evidence="1"/>
<dbReference type="EMBL" id="CP000020">
    <property type="protein sequence ID" value="AAW85654.1"/>
    <property type="molecule type" value="Genomic_DNA"/>
</dbReference>
<dbReference type="RefSeq" id="WP_011261782.1">
    <property type="nucleotide sequence ID" value="NC_006840.2"/>
</dbReference>
<dbReference type="RefSeq" id="YP_204542.1">
    <property type="nucleotide sequence ID" value="NC_006840.2"/>
</dbReference>
<dbReference type="SMR" id="Q5E5P2"/>
<dbReference type="STRING" id="312309.VF_1159"/>
<dbReference type="EnsemblBacteria" id="AAW85654">
    <property type="protein sequence ID" value="AAW85654"/>
    <property type="gene ID" value="VF_1159"/>
</dbReference>
<dbReference type="GeneID" id="54163830"/>
<dbReference type="KEGG" id="vfi:VF_1159"/>
<dbReference type="PATRIC" id="fig|312309.11.peg.1166"/>
<dbReference type="eggNOG" id="COG0017">
    <property type="taxonomic scope" value="Bacteria"/>
</dbReference>
<dbReference type="HOGENOM" id="CLU_004553_2_0_6"/>
<dbReference type="OrthoDB" id="9762036at2"/>
<dbReference type="Proteomes" id="UP000000537">
    <property type="component" value="Chromosome I"/>
</dbReference>
<dbReference type="GO" id="GO:0005737">
    <property type="term" value="C:cytoplasm"/>
    <property type="evidence" value="ECO:0007669"/>
    <property type="project" value="UniProtKB-SubCell"/>
</dbReference>
<dbReference type="GO" id="GO:0004816">
    <property type="term" value="F:asparagine-tRNA ligase activity"/>
    <property type="evidence" value="ECO:0007669"/>
    <property type="project" value="UniProtKB-UniRule"/>
</dbReference>
<dbReference type="GO" id="GO:0005524">
    <property type="term" value="F:ATP binding"/>
    <property type="evidence" value="ECO:0007669"/>
    <property type="project" value="UniProtKB-UniRule"/>
</dbReference>
<dbReference type="GO" id="GO:0003676">
    <property type="term" value="F:nucleic acid binding"/>
    <property type="evidence" value="ECO:0007669"/>
    <property type="project" value="InterPro"/>
</dbReference>
<dbReference type="GO" id="GO:0006421">
    <property type="term" value="P:asparaginyl-tRNA aminoacylation"/>
    <property type="evidence" value="ECO:0007669"/>
    <property type="project" value="UniProtKB-UniRule"/>
</dbReference>
<dbReference type="CDD" id="cd00776">
    <property type="entry name" value="AsxRS_core"/>
    <property type="match status" value="1"/>
</dbReference>
<dbReference type="CDD" id="cd04318">
    <property type="entry name" value="EcAsnRS_like_N"/>
    <property type="match status" value="1"/>
</dbReference>
<dbReference type="FunFam" id="3.30.930.10:FF:000016">
    <property type="entry name" value="Asparagine--tRNA ligase"/>
    <property type="match status" value="1"/>
</dbReference>
<dbReference type="Gene3D" id="3.30.930.10">
    <property type="entry name" value="Bira Bifunctional Protein, Domain 2"/>
    <property type="match status" value="1"/>
</dbReference>
<dbReference type="Gene3D" id="2.40.50.140">
    <property type="entry name" value="Nucleic acid-binding proteins"/>
    <property type="match status" value="1"/>
</dbReference>
<dbReference type="HAMAP" id="MF_00534">
    <property type="entry name" value="Asn_tRNA_synth"/>
    <property type="match status" value="1"/>
</dbReference>
<dbReference type="InterPro" id="IPR004364">
    <property type="entry name" value="Aa-tRNA-synt_II"/>
</dbReference>
<dbReference type="InterPro" id="IPR006195">
    <property type="entry name" value="aa-tRNA-synth_II"/>
</dbReference>
<dbReference type="InterPro" id="IPR045864">
    <property type="entry name" value="aa-tRNA-synth_II/BPL/LPL"/>
</dbReference>
<dbReference type="InterPro" id="IPR004522">
    <property type="entry name" value="Asn-tRNA-ligase"/>
</dbReference>
<dbReference type="InterPro" id="IPR002312">
    <property type="entry name" value="Asp/Asn-tRNA-synth_IIb"/>
</dbReference>
<dbReference type="InterPro" id="IPR012340">
    <property type="entry name" value="NA-bd_OB-fold"/>
</dbReference>
<dbReference type="InterPro" id="IPR004365">
    <property type="entry name" value="NA-bd_OB_tRNA"/>
</dbReference>
<dbReference type="NCBIfam" id="TIGR00457">
    <property type="entry name" value="asnS"/>
    <property type="match status" value="1"/>
</dbReference>
<dbReference type="NCBIfam" id="NF003037">
    <property type="entry name" value="PRK03932.1"/>
    <property type="match status" value="1"/>
</dbReference>
<dbReference type="PANTHER" id="PTHR22594:SF34">
    <property type="entry name" value="ASPARAGINE--TRNA LIGASE, MITOCHONDRIAL-RELATED"/>
    <property type="match status" value="1"/>
</dbReference>
<dbReference type="PANTHER" id="PTHR22594">
    <property type="entry name" value="ASPARTYL/LYSYL-TRNA SYNTHETASE"/>
    <property type="match status" value="1"/>
</dbReference>
<dbReference type="Pfam" id="PF00152">
    <property type="entry name" value="tRNA-synt_2"/>
    <property type="match status" value="1"/>
</dbReference>
<dbReference type="Pfam" id="PF01336">
    <property type="entry name" value="tRNA_anti-codon"/>
    <property type="match status" value="1"/>
</dbReference>
<dbReference type="PRINTS" id="PR01042">
    <property type="entry name" value="TRNASYNTHASP"/>
</dbReference>
<dbReference type="SUPFAM" id="SSF55681">
    <property type="entry name" value="Class II aaRS and biotin synthetases"/>
    <property type="match status" value="1"/>
</dbReference>
<dbReference type="SUPFAM" id="SSF50249">
    <property type="entry name" value="Nucleic acid-binding proteins"/>
    <property type="match status" value="1"/>
</dbReference>
<dbReference type="PROSITE" id="PS50862">
    <property type="entry name" value="AA_TRNA_LIGASE_II"/>
    <property type="match status" value="1"/>
</dbReference>
<comment type="catalytic activity">
    <reaction evidence="1">
        <text>tRNA(Asn) + L-asparagine + ATP = L-asparaginyl-tRNA(Asn) + AMP + diphosphate + H(+)</text>
        <dbReference type="Rhea" id="RHEA:11180"/>
        <dbReference type="Rhea" id="RHEA-COMP:9659"/>
        <dbReference type="Rhea" id="RHEA-COMP:9674"/>
        <dbReference type="ChEBI" id="CHEBI:15378"/>
        <dbReference type="ChEBI" id="CHEBI:30616"/>
        <dbReference type="ChEBI" id="CHEBI:33019"/>
        <dbReference type="ChEBI" id="CHEBI:58048"/>
        <dbReference type="ChEBI" id="CHEBI:78442"/>
        <dbReference type="ChEBI" id="CHEBI:78515"/>
        <dbReference type="ChEBI" id="CHEBI:456215"/>
        <dbReference type="EC" id="6.1.1.22"/>
    </reaction>
</comment>
<comment type="subunit">
    <text evidence="1">Homodimer.</text>
</comment>
<comment type="subcellular location">
    <subcellularLocation>
        <location evidence="1">Cytoplasm</location>
    </subcellularLocation>
</comment>
<comment type="similarity">
    <text evidence="1">Belongs to the class-II aminoacyl-tRNA synthetase family.</text>
</comment>
<sequence length="466" mass="52444">MTYAPVTDVLSGKLAVDSEVTVRGWIRSRRDSKAGISFLAVYDGSCFDPIQAVVPNDLNNYNDEVLKLTTGCSVEVTGTIVASPAKGQDFELAATEVKVVGWVEDAETYPMAKTRHSIEYLREVAHLRPRTNVIGAVARVRNCLSQAIHRFYHEQGYFWMSAPLITASDAEGAGEMFRVSTLDHANLPLDDKGNVDYDKDFFGKETFLTVSGQLNAETYACALSKVYTFGPTFRAENSHTSRHLAEFWMVEPEVAFATLDDVAKLAEDMLKYVFEAVLAERRDDLEFFASRIDKQAITRLEQFVSSDFAQVDYTDAIQILKDSGRDFEFDVEWGIDMSSEHERYLAEEHFKAPVIVKNYPKDIKAFYMRQNDDGKTVAAMDVLAPGIGEIIGGSQREERLDILDARMIEMGIDPEHMSWYRDLRRYGTVPHAGFGLGFERLVSYVTGMGNVRDVIPFPRTPRSANF</sequence>
<feature type="chain" id="PRO_1000051454" description="Asparagine--tRNA ligase">
    <location>
        <begin position="1"/>
        <end position="466"/>
    </location>
</feature>
<gene>
    <name evidence="1" type="primary">asnS</name>
    <name type="ordered locus">VF_1159</name>
</gene>
<proteinExistence type="inferred from homology"/>
<reference key="1">
    <citation type="journal article" date="2005" name="Proc. Natl. Acad. Sci. U.S.A.">
        <title>Complete genome sequence of Vibrio fischeri: a symbiotic bacterium with pathogenic congeners.</title>
        <authorList>
            <person name="Ruby E.G."/>
            <person name="Urbanowski M."/>
            <person name="Campbell J."/>
            <person name="Dunn A."/>
            <person name="Faini M."/>
            <person name="Gunsalus R."/>
            <person name="Lostroh P."/>
            <person name="Lupp C."/>
            <person name="McCann J."/>
            <person name="Millikan D."/>
            <person name="Schaefer A."/>
            <person name="Stabb E."/>
            <person name="Stevens A."/>
            <person name="Visick K."/>
            <person name="Whistler C."/>
            <person name="Greenberg E.P."/>
        </authorList>
    </citation>
    <scope>NUCLEOTIDE SEQUENCE [LARGE SCALE GENOMIC DNA]</scope>
    <source>
        <strain>ATCC 700601 / ES114</strain>
    </source>
</reference>
<protein>
    <recommendedName>
        <fullName evidence="1">Asparagine--tRNA ligase</fullName>
        <ecNumber evidence="1">6.1.1.22</ecNumber>
    </recommendedName>
    <alternativeName>
        <fullName evidence="1">Asparaginyl-tRNA synthetase</fullName>
        <shortName evidence="1">AsnRS</shortName>
    </alternativeName>
</protein>